<feature type="chain" id="PRO_1000060100" description="L-seryl-tRNA(Sec) selenium transferase">
    <location>
        <begin position="1"/>
        <end position="463"/>
    </location>
</feature>
<feature type="modified residue" description="N6-(pyridoxal phosphate)lysine" evidence="1">
    <location>
        <position position="295"/>
    </location>
</feature>
<sequence>MSTESQHLYSQLPAIDRLLRDPAIEPLVAQHGQTLISELLRQLQLQARETIKQHQRLPDWCADWPQALGARLAQQQRPSLAPVFNLSGTVLHTNLGRALLAQPAIEAVTRSMGAAVTLEYDLDGAGRGHRDRAVADLLCQLTGAEDACIVNNNAAAVLLMLAAIAPGKQVVVSRGELVEIGGAFRIPDVMRQAGCQLVEVGTTNRTHLKDYRNAINDQTGLLMKVHTSNYSIQGFTAAVDEAELAQLGAEHGLPTATDLGSGSLIDMAQYGLPAEPMPQRLLAAGVDLVTFSGDKLLGGPQAGIIVGKKALIARLQQHPLKRALRVGKLTLAALEATLRLYQQPELLGQQLPTLRLLTRPQQAMQAAAERLLQVLTPQFTGHFQLRAEPCWSQIGSGSLPVDRLPSYALTFTPQDGRGATLEALAERWRALPQPVIGRINDGRLWLDLRCLEQEDALIEALSA</sequence>
<protein>
    <recommendedName>
        <fullName evidence="1">L-seryl-tRNA(Sec) selenium transferase</fullName>
        <ecNumber evidence="1">2.9.1.1</ecNumber>
    </recommendedName>
    <alternativeName>
        <fullName evidence="1">Selenocysteine synthase</fullName>
        <shortName evidence="1">Sec synthase</shortName>
    </alternativeName>
    <alternativeName>
        <fullName evidence="1">Selenocysteinyl-tRNA(Sec) synthase</fullName>
    </alternativeName>
</protein>
<keyword id="KW-0963">Cytoplasm</keyword>
<keyword id="KW-0648">Protein biosynthesis</keyword>
<keyword id="KW-0663">Pyridoxal phosphate</keyword>
<keyword id="KW-0711">Selenium</keyword>
<keyword id="KW-0808">Transferase</keyword>
<comment type="function">
    <text evidence="1">Converts seryl-tRNA(Sec) to selenocysteinyl-tRNA(Sec) required for selenoprotein biosynthesis.</text>
</comment>
<comment type="catalytic activity">
    <reaction evidence="1">
        <text>L-seryl-tRNA(Sec) + selenophosphate + H(+) = L-selenocysteinyl-tRNA(Sec) + phosphate</text>
        <dbReference type="Rhea" id="RHEA:22728"/>
        <dbReference type="Rhea" id="RHEA-COMP:9742"/>
        <dbReference type="Rhea" id="RHEA-COMP:9743"/>
        <dbReference type="ChEBI" id="CHEBI:15378"/>
        <dbReference type="ChEBI" id="CHEBI:16144"/>
        <dbReference type="ChEBI" id="CHEBI:43474"/>
        <dbReference type="ChEBI" id="CHEBI:78533"/>
        <dbReference type="ChEBI" id="CHEBI:78573"/>
        <dbReference type="EC" id="2.9.1.1"/>
    </reaction>
</comment>
<comment type="cofactor">
    <cofactor evidence="1">
        <name>pyridoxal 5'-phosphate</name>
        <dbReference type="ChEBI" id="CHEBI:597326"/>
    </cofactor>
</comment>
<comment type="pathway">
    <text evidence="1">Aminoacyl-tRNA biosynthesis; selenocysteinyl-tRNA(Sec) biosynthesis; selenocysteinyl-tRNA(Sec) from L-seryl-tRNA(Sec) (bacterial route): step 1/1.</text>
</comment>
<comment type="subunit">
    <text evidence="1">Homodecamer; pentamer of dimers. Binds only one seryl-tRNA(Sec) per dimer.</text>
</comment>
<comment type="subcellular location">
    <subcellularLocation>
        <location evidence="1">Cytoplasm</location>
    </subcellularLocation>
</comment>
<comment type="similarity">
    <text evidence="1">Belongs to the SelA family.</text>
</comment>
<organism>
    <name type="scientific">Serratia proteamaculans (strain 568)</name>
    <dbReference type="NCBI Taxonomy" id="399741"/>
    <lineage>
        <taxon>Bacteria</taxon>
        <taxon>Pseudomonadati</taxon>
        <taxon>Pseudomonadota</taxon>
        <taxon>Gammaproteobacteria</taxon>
        <taxon>Enterobacterales</taxon>
        <taxon>Yersiniaceae</taxon>
        <taxon>Serratia</taxon>
    </lineage>
</organism>
<name>SELA_SERP5</name>
<reference key="1">
    <citation type="submission" date="2007-09" db="EMBL/GenBank/DDBJ databases">
        <title>Complete sequence of chromosome of Serratia proteamaculans 568.</title>
        <authorList>
            <consortium name="US DOE Joint Genome Institute"/>
            <person name="Copeland A."/>
            <person name="Lucas S."/>
            <person name="Lapidus A."/>
            <person name="Barry K."/>
            <person name="Glavina del Rio T."/>
            <person name="Dalin E."/>
            <person name="Tice H."/>
            <person name="Pitluck S."/>
            <person name="Chain P."/>
            <person name="Malfatti S."/>
            <person name="Shin M."/>
            <person name="Vergez L."/>
            <person name="Schmutz J."/>
            <person name="Larimer F."/>
            <person name="Land M."/>
            <person name="Hauser L."/>
            <person name="Kyrpides N."/>
            <person name="Kim E."/>
            <person name="Taghavi S."/>
            <person name="Newman L."/>
            <person name="Vangronsveld J."/>
            <person name="van der Lelie D."/>
            <person name="Richardson P."/>
        </authorList>
    </citation>
    <scope>NUCLEOTIDE SEQUENCE [LARGE SCALE GENOMIC DNA]</scope>
    <source>
        <strain>568</strain>
    </source>
</reference>
<proteinExistence type="inferred from homology"/>
<accession>A8G7W0</accession>
<gene>
    <name evidence="1" type="primary">selA</name>
    <name type="ordered locus">Spro_0090</name>
</gene>
<evidence type="ECO:0000255" key="1">
    <source>
        <dbReference type="HAMAP-Rule" id="MF_00423"/>
    </source>
</evidence>
<dbReference type="EC" id="2.9.1.1" evidence="1"/>
<dbReference type="EMBL" id="CP000826">
    <property type="protein sequence ID" value="ABV39200.1"/>
    <property type="molecule type" value="Genomic_DNA"/>
</dbReference>
<dbReference type="SMR" id="A8G7W0"/>
<dbReference type="STRING" id="399741.Spro_0090"/>
<dbReference type="KEGG" id="spe:Spro_0090"/>
<dbReference type="eggNOG" id="COG1921">
    <property type="taxonomic scope" value="Bacteria"/>
</dbReference>
<dbReference type="HOGENOM" id="CLU_038142_1_0_6"/>
<dbReference type="OrthoDB" id="9787096at2"/>
<dbReference type="UniPathway" id="UPA00906">
    <property type="reaction ID" value="UER00896"/>
</dbReference>
<dbReference type="GO" id="GO:0005737">
    <property type="term" value="C:cytoplasm"/>
    <property type="evidence" value="ECO:0007669"/>
    <property type="project" value="UniProtKB-SubCell"/>
</dbReference>
<dbReference type="GO" id="GO:0004125">
    <property type="term" value="F:L-seryl-tRNA(Sec) selenium transferase activity"/>
    <property type="evidence" value="ECO:0007669"/>
    <property type="project" value="UniProtKB-UniRule"/>
</dbReference>
<dbReference type="GO" id="GO:0001717">
    <property type="term" value="P:conversion of seryl-tRNAsec to selenocys-tRNAsec"/>
    <property type="evidence" value="ECO:0007669"/>
    <property type="project" value="UniProtKB-UniRule"/>
</dbReference>
<dbReference type="GO" id="GO:0001514">
    <property type="term" value="P:selenocysteine incorporation"/>
    <property type="evidence" value="ECO:0007669"/>
    <property type="project" value="UniProtKB-UniRule"/>
</dbReference>
<dbReference type="FunFam" id="3.40.640.10:FF:000028">
    <property type="entry name" value="L-seryl-tRNA(Sec) selenium transferase"/>
    <property type="match status" value="1"/>
</dbReference>
<dbReference type="Gene3D" id="3.90.1150.180">
    <property type="match status" value="1"/>
</dbReference>
<dbReference type="Gene3D" id="3.40.640.10">
    <property type="entry name" value="Type I PLP-dependent aspartate aminotransferase-like (Major domain)"/>
    <property type="match status" value="1"/>
</dbReference>
<dbReference type="HAMAP" id="MF_00423">
    <property type="entry name" value="SelA"/>
    <property type="match status" value="1"/>
</dbReference>
<dbReference type="InterPro" id="IPR015424">
    <property type="entry name" value="PyrdxlP-dep_Trfase"/>
</dbReference>
<dbReference type="InterPro" id="IPR015421">
    <property type="entry name" value="PyrdxlP-dep_Trfase_major"/>
</dbReference>
<dbReference type="InterPro" id="IPR018319">
    <property type="entry name" value="SelA-like"/>
</dbReference>
<dbReference type="InterPro" id="IPR004534">
    <property type="entry name" value="SelA_trans"/>
</dbReference>
<dbReference type="InterPro" id="IPR025862">
    <property type="entry name" value="SelA_trans_N_dom"/>
</dbReference>
<dbReference type="NCBIfam" id="TIGR00474">
    <property type="entry name" value="selA"/>
    <property type="match status" value="1"/>
</dbReference>
<dbReference type="PANTHER" id="PTHR32328">
    <property type="entry name" value="L-SERYL-TRNA(SEC) SELENIUM TRANSFERASE"/>
    <property type="match status" value="1"/>
</dbReference>
<dbReference type="PANTHER" id="PTHR32328:SF0">
    <property type="entry name" value="L-SERYL-TRNA(SEC) SELENIUM TRANSFERASE"/>
    <property type="match status" value="1"/>
</dbReference>
<dbReference type="Pfam" id="PF12390">
    <property type="entry name" value="Se-cys_synth_N"/>
    <property type="match status" value="1"/>
</dbReference>
<dbReference type="Pfam" id="PF03841">
    <property type="entry name" value="SelA"/>
    <property type="match status" value="1"/>
</dbReference>
<dbReference type="SUPFAM" id="SSF53383">
    <property type="entry name" value="PLP-dependent transferases"/>
    <property type="match status" value="1"/>
</dbReference>